<name>CATE_PSEPU</name>
<protein>
    <recommendedName>
        <fullName>Catalase HPII</fullName>
        <ecNumber>1.11.1.6</ecNumber>
    </recommendedName>
</protein>
<accession>P95539</accession>
<organism>
    <name type="scientific">Pseudomonas putida</name>
    <name type="common">Arthrobacter siderocapsulatus</name>
    <dbReference type="NCBI Taxonomy" id="303"/>
    <lineage>
        <taxon>Bacteria</taxon>
        <taxon>Pseudomonadati</taxon>
        <taxon>Pseudomonadota</taxon>
        <taxon>Gammaproteobacteria</taxon>
        <taxon>Pseudomonadales</taxon>
        <taxon>Pseudomonadaceae</taxon>
        <taxon>Pseudomonas</taxon>
    </lineage>
</organism>
<dbReference type="EC" id="1.11.1.6"/>
<dbReference type="EMBL" id="U82622">
    <property type="protein sequence ID" value="AAB40866.1"/>
    <property type="molecule type" value="Genomic_DNA"/>
</dbReference>
<dbReference type="SMR" id="P95539"/>
<dbReference type="GO" id="GO:0005829">
    <property type="term" value="C:cytosol"/>
    <property type="evidence" value="ECO:0007669"/>
    <property type="project" value="TreeGrafter"/>
</dbReference>
<dbReference type="GO" id="GO:0004096">
    <property type="term" value="F:catalase activity"/>
    <property type="evidence" value="ECO:0007669"/>
    <property type="project" value="UniProtKB-EC"/>
</dbReference>
<dbReference type="GO" id="GO:0020037">
    <property type="term" value="F:heme binding"/>
    <property type="evidence" value="ECO:0007669"/>
    <property type="project" value="InterPro"/>
</dbReference>
<dbReference type="GO" id="GO:0046872">
    <property type="term" value="F:metal ion binding"/>
    <property type="evidence" value="ECO:0007669"/>
    <property type="project" value="UniProtKB-KW"/>
</dbReference>
<dbReference type="GO" id="GO:0042744">
    <property type="term" value="P:hydrogen peroxide catabolic process"/>
    <property type="evidence" value="ECO:0007669"/>
    <property type="project" value="UniProtKB-KW"/>
</dbReference>
<dbReference type="GO" id="GO:0006979">
    <property type="term" value="P:response to oxidative stress"/>
    <property type="evidence" value="ECO:0007669"/>
    <property type="project" value="InterPro"/>
</dbReference>
<dbReference type="CDD" id="cd08155">
    <property type="entry name" value="catalase_clade_2"/>
    <property type="match status" value="1"/>
</dbReference>
<dbReference type="CDD" id="cd03132">
    <property type="entry name" value="GATase1_catalase"/>
    <property type="match status" value="1"/>
</dbReference>
<dbReference type="FunFam" id="2.40.180.10:FF:000003">
    <property type="entry name" value="Catalase"/>
    <property type="match status" value="1"/>
</dbReference>
<dbReference type="FunFam" id="1.20.1370.20:FF:000001">
    <property type="entry name" value="Catalase HPII"/>
    <property type="match status" value="1"/>
</dbReference>
<dbReference type="Gene3D" id="1.20.1370.20">
    <property type="match status" value="1"/>
</dbReference>
<dbReference type="Gene3D" id="3.40.50.880">
    <property type="match status" value="1"/>
</dbReference>
<dbReference type="Gene3D" id="2.40.180.10">
    <property type="entry name" value="Catalase core domain"/>
    <property type="match status" value="1"/>
</dbReference>
<dbReference type="InterPro" id="IPR018028">
    <property type="entry name" value="Catalase"/>
</dbReference>
<dbReference type="InterPro" id="IPR024708">
    <property type="entry name" value="Catalase_AS"/>
</dbReference>
<dbReference type="InterPro" id="IPR024712">
    <property type="entry name" value="Catalase_clade2"/>
</dbReference>
<dbReference type="InterPro" id="IPR043156">
    <property type="entry name" value="Catalase_clade2_helical"/>
</dbReference>
<dbReference type="InterPro" id="IPR011614">
    <property type="entry name" value="Catalase_core"/>
</dbReference>
<dbReference type="InterPro" id="IPR002226">
    <property type="entry name" value="Catalase_haem_BS"/>
</dbReference>
<dbReference type="InterPro" id="IPR010582">
    <property type="entry name" value="Catalase_immune_responsive"/>
</dbReference>
<dbReference type="InterPro" id="IPR041399">
    <property type="entry name" value="Catalase_large_C"/>
</dbReference>
<dbReference type="InterPro" id="IPR020835">
    <property type="entry name" value="Catalase_sf"/>
</dbReference>
<dbReference type="InterPro" id="IPR029062">
    <property type="entry name" value="Class_I_gatase-like"/>
</dbReference>
<dbReference type="NCBIfam" id="NF008422">
    <property type="entry name" value="PRK11249.1"/>
    <property type="match status" value="1"/>
</dbReference>
<dbReference type="PANTHER" id="PTHR42821">
    <property type="entry name" value="CATALASE"/>
    <property type="match status" value="1"/>
</dbReference>
<dbReference type="PANTHER" id="PTHR42821:SF1">
    <property type="entry name" value="CATALASE-B"/>
    <property type="match status" value="1"/>
</dbReference>
<dbReference type="Pfam" id="PF00199">
    <property type="entry name" value="Catalase"/>
    <property type="match status" value="1"/>
</dbReference>
<dbReference type="Pfam" id="PF06628">
    <property type="entry name" value="Catalase-rel"/>
    <property type="match status" value="1"/>
</dbReference>
<dbReference type="Pfam" id="PF18011">
    <property type="entry name" value="Catalase_C"/>
    <property type="match status" value="1"/>
</dbReference>
<dbReference type="PIRSF" id="PIRSF038927">
    <property type="entry name" value="Catalase_clade2"/>
    <property type="match status" value="1"/>
</dbReference>
<dbReference type="PRINTS" id="PR00067">
    <property type="entry name" value="CATALASE"/>
</dbReference>
<dbReference type="SMART" id="SM01060">
    <property type="entry name" value="Catalase"/>
    <property type="match status" value="1"/>
</dbReference>
<dbReference type="SUPFAM" id="SSF52317">
    <property type="entry name" value="Class I glutamine amidotransferase-like"/>
    <property type="match status" value="1"/>
</dbReference>
<dbReference type="SUPFAM" id="SSF56634">
    <property type="entry name" value="Heme-dependent catalase-like"/>
    <property type="match status" value="1"/>
</dbReference>
<dbReference type="PROSITE" id="PS00437">
    <property type="entry name" value="CATALASE_1"/>
    <property type="match status" value="1"/>
</dbReference>
<dbReference type="PROSITE" id="PS00438">
    <property type="entry name" value="CATALASE_2"/>
    <property type="match status" value="1"/>
</dbReference>
<dbReference type="PROSITE" id="PS51402">
    <property type="entry name" value="CATALASE_3"/>
    <property type="match status" value="1"/>
</dbReference>
<sequence>MPSKKTDAPKQSEAAGTQTPDRANTNAKLQSLETFRSDATGQALRTNQGVKIADNQNSLKAGARGPSLLEDFIMREKITHFDHERIPERIVHARGTGAHGYFQSYGNHADLTKAGFLQDPDKITPVFVRFSTVQGPRGSGDTVRDVRGFAVKFYTDEGNFDLVGNNMPVFFIQDAIKFPDFVHAVKPEPHNEIPTGGSAHDTFWDFVSLVPESAHMVMWAMSDRAIPRSLRMMEGFGVHTFRLINAEGVASFVKFHWKPRQGVHSLLWDEAQKLAGKDTDFQRRDLWEAIENGDYPEWELGVQIVPEADEHKFDFDLLDPTKIIPEELVPVTPLGKMVLNRNPDNFFAEVEQVAFCPGHIVPGIDFTNDPLLQGRLFSYTDTQISRLGGPNFHQIPINRPVAPNHNNQRDALHQHVVHKGRASYEPNSIDGGWPKETPAAAQDGGFESYQERIDAHKIRQRSESFGDHFSQARLFFQSMSPTEQQHIIKAYSFELGKVEREHIRAREVNEILANIDLKLAAAVAANLGLPAPKAGTVQVKGSQLAQSPALSQMNHPGSVGIKGRKIAVLVANGVDAASVDKLIKALEAHSARPMLLGPTSAPVKATDGKQLPVEASMEGMPSIMFDGIVVPSGKASTDALAASGLAKHFLLEGYKHLKAMVLTKELATGLGLKEDKGLLLADDQKAVDAFVKAVEGHRVWEREAAAEAVPA</sequence>
<evidence type="ECO:0000250" key="1"/>
<evidence type="ECO:0000255" key="2">
    <source>
        <dbReference type="PROSITE-ProRule" id="PRU10013"/>
    </source>
</evidence>
<evidence type="ECO:0000256" key="3">
    <source>
        <dbReference type="SAM" id="MobiDB-lite"/>
    </source>
</evidence>
<evidence type="ECO:0000305" key="4"/>
<keyword id="KW-0963">Cytoplasm</keyword>
<keyword id="KW-0349">Heme</keyword>
<keyword id="KW-0376">Hydrogen peroxide</keyword>
<keyword id="KW-0408">Iron</keyword>
<keyword id="KW-0479">Metal-binding</keyword>
<keyword id="KW-0560">Oxidoreductase</keyword>
<keyword id="KW-0575">Peroxidase</keyword>
<proteinExistence type="inferred from homology"/>
<comment type="function">
    <text>Decomposes hydrogen peroxide into water and oxygen; serves to protect cells from the toxic effects of hydrogen peroxide.</text>
</comment>
<comment type="catalytic activity">
    <reaction evidence="2">
        <text>2 H2O2 = O2 + 2 H2O</text>
        <dbReference type="Rhea" id="RHEA:20309"/>
        <dbReference type="ChEBI" id="CHEBI:15377"/>
        <dbReference type="ChEBI" id="CHEBI:15379"/>
        <dbReference type="ChEBI" id="CHEBI:16240"/>
        <dbReference type="EC" id="1.11.1.6"/>
    </reaction>
</comment>
<comment type="cofactor">
    <cofactor>
        <name>heme</name>
        <dbReference type="ChEBI" id="CHEBI:30413"/>
    </cofactor>
</comment>
<comment type="subcellular location">
    <subcellularLocation>
        <location evidence="4">Cytoplasm</location>
    </subcellularLocation>
</comment>
<comment type="similarity">
    <text evidence="4">Belongs to the catalase family. HPII subfamily.</text>
</comment>
<feature type="chain" id="PRO_0000084973" description="Catalase HPII">
    <location>
        <begin position="1"/>
        <end position="711"/>
    </location>
</feature>
<feature type="region of interest" description="Disordered" evidence="3">
    <location>
        <begin position="1"/>
        <end position="27"/>
    </location>
</feature>
<feature type="compositionally biased region" description="Basic and acidic residues" evidence="3">
    <location>
        <begin position="1"/>
        <end position="10"/>
    </location>
</feature>
<feature type="compositionally biased region" description="Polar residues" evidence="3">
    <location>
        <begin position="14"/>
        <end position="27"/>
    </location>
</feature>
<feature type="active site" evidence="2">
    <location>
        <position position="92"/>
    </location>
</feature>
<feature type="active site" evidence="2">
    <location>
        <position position="165"/>
    </location>
</feature>
<feature type="binding site" description="axial binding residue" evidence="1">
    <location>
        <position position="379"/>
    </location>
    <ligand>
        <name>heme</name>
        <dbReference type="ChEBI" id="CHEBI:30413"/>
    </ligand>
    <ligandPart>
        <name>Fe</name>
        <dbReference type="ChEBI" id="CHEBI:18248"/>
    </ligandPart>
</feature>
<gene>
    <name type="primary">katE</name>
    <name type="synonym">catC</name>
</gene>
<reference key="1">
    <citation type="submission" date="1997-01" db="EMBL/GenBank/DDBJ databases">
        <title>A method to derive a promoter fusion and gene inactivation of the stationary-phase inducible catalase (catC) from Pseudomonas putida.</title>
        <authorList>
            <person name="Miller C.D."/>
            <person name="Kim Y.C."/>
            <person name="Anderson A.J."/>
        </authorList>
    </citation>
    <scope>NUCLEOTIDE SEQUENCE [GENOMIC DNA]</scope>
</reference>